<dbReference type="EMBL" id="AE009949">
    <property type="protein sequence ID" value="AAL97183.1"/>
    <property type="molecule type" value="Genomic_DNA"/>
</dbReference>
<dbReference type="RefSeq" id="WP_002985847.1">
    <property type="nucleotide sequence ID" value="NC_003485.1"/>
</dbReference>
<dbReference type="SMR" id="P60420"/>
<dbReference type="KEGG" id="spm:spyM18_0447"/>
<dbReference type="HOGENOM" id="CLU_159890_1_0_9"/>
<dbReference type="GO" id="GO:0005737">
    <property type="term" value="C:cytoplasm"/>
    <property type="evidence" value="ECO:0007669"/>
    <property type="project" value="UniProtKB-SubCell"/>
</dbReference>
<dbReference type="HAMAP" id="MF_01126">
    <property type="entry name" value="UPF0298"/>
    <property type="match status" value="1"/>
</dbReference>
<dbReference type="InterPro" id="IPR016979">
    <property type="entry name" value="DUF2129"/>
</dbReference>
<dbReference type="NCBIfam" id="NF002631">
    <property type="entry name" value="PRK02302.1"/>
    <property type="match status" value="1"/>
</dbReference>
<dbReference type="Pfam" id="PF09902">
    <property type="entry name" value="DUF2129"/>
    <property type="match status" value="1"/>
</dbReference>
<dbReference type="PIRSF" id="PIRSF031653">
    <property type="entry name" value="UCP031653"/>
    <property type="match status" value="1"/>
</dbReference>
<gene>
    <name type="ordered locus">spyM18_0447</name>
</gene>
<reference key="1">
    <citation type="journal article" date="2002" name="Proc. Natl. Acad. Sci. U.S.A.">
        <title>Genome sequence and comparative microarray analysis of serotype M18 group A Streptococcus strains associated with acute rheumatic fever outbreaks.</title>
        <authorList>
            <person name="Smoot J.C."/>
            <person name="Barbian K.D."/>
            <person name="Van Gompel J.J."/>
            <person name="Smoot L.M."/>
            <person name="Chaussee M.S."/>
            <person name="Sylva G.L."/>
            <person name="Sturdevant D.E."/>
            <person name="Ricklefs S.M."/>
            <person name="Porcella S.F."/>
            <person name="Parkins L.D."/>
            <person name="Beres S.B."/>
            <person name="Campbell D.S."/>
            <person name="Smith T.M."/>
            <person name="Zhang Q."/>
            <person name="Kapur V."/>
            <person name="Daly J.A."/>
            <person name="Veasy L.G."/>
            <person name="Musser J.M."/>
        </authorList>
    </citation>
    <scope>NUCLEOTIDE SEQUENCE [LARGE SCALE GENOMIC DNA]</scope>
    <source>
        <strain>MGAS8232</strain>
    </source>
</reference>
<evidence type="ECO:0000255" key="1">
    <source>
        <dbReference type="HAMAP-Rule" id="MF_01126"/>
    </source>
</evidence>
<accession>P60420</accession>
<accession>Q9A191</accession>
<comment type="subcellular location">
    <subcellularLocation>
        <location evidence="1">Cytoplasm</location>
    </subcellularLocation>
</comment>
<comment type="similarity">
    <text evidence="1">Belongs to the UPF0298 family.</text>
</comment>
<protein>
    <recommendedName>
        <fullName evidence="1">UPF0298 protein spyM18_0447</fullName>
    </recommendedName>
</protein>
<feature type="chain" id="PRO_0000074679" description="UPF0298 protein spyM18_0447">
    <location>
        <begin position="1"/>
        <end position="91"/>
    </location>
</feature>
<organism>
    <name type="scientific">Streptococcus pyogenes serotype M18 (strain MGAS8232)</name>
    <dbReference type="NCBI Taxonomy" id="186103"/>
    <lineage>
        <taxon>Bacteria</taxon>
        <taxon>Bacillati</taxon>
        <taxon>Bacillota</taxon>
        <taxon>Bacilli</taxon>
        <taxon>Lactobacillales</taxon>
        <taxon>Streptococcaceae</taxon>
        <taxon>Streptococcus</taxon>
    </lineage>
</organism>
<keyword id="KW-0963">Cytoplasm</keyword>
<sequence length="91" mass="11103">MFQKQERIGLVVYLYYNRDARKLSKFGDLYYHSKRSRYLIIYINKNDLDTKLEEMRRLKCVKDIRPSAFDDIDRQFVGNLHRDETNNHQKG</sequence>
<proteinExistence type="inferred from homology"/>
<name>Y447_STRP8</name>